<dbReference type="EC" id="1.6.5.2" evidence="1"/>
<dbReference type="EMBL" id="CP000948">
    <property type="protein sequence ID" value="ACB02205.1"/>
    <property type="molecule type" value="Genomic_DNA"/>
</dbReference>
<dbReference type="SMR" id="B1X9C5"/>
<dbReference type="CAZy" id="AA6">
    <property type="family name" value="Auxiliary Activities 6"/>
</dbReference>
<dbReference type="KEGG" id="ecd:ECDH10B_1076"/>
<dbReference type="HOGENOM" id="CLU_051402_0_2_6"/>
<dbReference type="GO" id="GO:0016020">
    <property type="term" value="C:membrane"/>
    <property type="evidence" value="ECO:0007669"/>
    <property type="project" value="TreeGrafter"/>
</dbReference>
<dbReference type="GO" id="GO:0050660">
    <property type="term" value="F:flavin adenine dinucleotide binding"/>
    <property type="evidence" value="ECO:0007669"/>
    <property type="project" value="UniProtKB-UniRule"/>
</dbReference>
<dbReference type="GO" id="GO:0010181">
    <property type="term" value="F:FMN binding"/>
    <property type="evidence" value="ECO:0007669"/>
    <property type="project" value="InterPro"/>
</dbReference>
<dbReference type="GO" id="GO:0051287">
    <property type="term" value="F:NAD binding"/>
    <property type="evidence" value="ECO:0007669"/>
    <property type="project" value="UniProtKB-UniRule"/>
</dbReference>
<dbReference type="GO" id="GO:0050136">
    <property type="term" value="F:NADH:ubiquinone reductase (non-electrogenic) activity"/>
    <property type="evidence" value="ECO:0007669"/>
    <property type="project" value="RHEA"/>
</dbReference>
<dbReference type="GO" id="GO:0050661">
    <property type="term" value="F:NADP binding"/>
    <property type="evidence" value="ECO:0007669"/>
    <property type="project" value="UniProtKB-UniRule"/>
</dbReference>
<dbReference type="GO" id="GO:0008753">
    <property type="term" value="F:NADPH dehydrogenase (quinone) activity"/>
    <property type="evidence" value="ECO:0007669"/>
    <property type="project" value="RHEA"/>
</dbReference>
<dbReference type="FunFam" id="3.40.50.360:FF:000004">
    <property type="entry name" value="NAD(P)H dehydrogenase (quinone)"/>
    <property type="match status" value="1"/>
</dbReference>
<dbReference type="Gene3D" id="3.40.50.360">
    <property type="match status" value="1"/>
</dbReference>
<dbReference type="HAMAP" id="MF_01017">
    <property type="entry name" value="NQOR"/>
    <property type="match status" value="1"/>
</dbReference>
<dbReference type="InterPro" id="IPR008254">
    <property type="entry name" value="Flavodoxin/NO_synth"/>
</dbReference>
<dbReference type="InterPro" id="IPR029039">
    <property type="entry name" value="Flavoprotein-like_sf"/>
</dbReference>
<dbReference type="InterPro" id="IPR010089">
    <property type="entry name" value="Flavoprotein_WrbA-like"/>
</dbReference>
<dbReference type="InterPro" id="IPR005025">
    <property type="entry name" value="FMN_Rdtase-like_dom"/>
</dbReference>
<dbReference type="InterPro" id="IPR037513">
    <property type="entry name" value="NQO"/>
</dbReference>
<dbReference type="NCBIfam" id="TIGR01755">
    <property type="entry name" value="flav_wrbA"/>
    <property type="match status" value="1"/>
</dbReference>
<dbReference type="NCBIfam" id="NF002999">
    <property type="entry name" value="PRK03767.1"/>
    <property type="match status" value="1"/>
</dbReference>
<dbReference type="PANTHER" id="PTHR30546">
    <property type="entry name" value="FLAVODOXIN-RELATED PROTEIN WRBA-RELATED"/>
    <property type="match status" value="1"/>
</dbReference>
<dbReference type="PANTHER" id="PTHR30546:SF23">
    <property type="entry name" value="FLAVOPROTEIN-LIKE PROTEIN YCP4-RELATED"/>
    <property type="match status" value="1"/>
</dbReference>
<dbReference type="Pfam" id="PF03358">
    <property type="entry name" value="FMN_red"/>
    <property type="match status" value="1"/>
</dbReference>
<dbReference type="SUPFAM" id="SSF52218">
    <property type="entry name" value="Flavoproteins"/>
    <property type="match status" value="1"/>
</dbReference>
<dbReference type="PROSITE" id="PS50902">
    <property type="entry name" value="FLAVODOXIN_LIKE"/>
    <property type="match status" value="1"/>
</dbReference>
<comment type="catalytic activity">
    <reaction evidence="1">
        <text>a quinone + NADH + H(+) = a quinol + NAD(+)</text>
        <dbReference type="Rhea" id="RHEA:46160"/>
        <dbReference type="ChEBI" id="CHEBI:15378"/>
        <dbReference type="ChEBI" id="CHEBI:24646"/>
        <dbReference type="ChEBI" id="CHEBI:57540"/>
        <dbReference type="ChEBI" id="CHEBI:57945"/>
        <dbReference type="ChEBI" id="CHEBI:132124"/>
        <dbReference type="EC" id="1.6.5.2"/>
    </reaction>
</comment>
<comment type="catalytic activity">
    <reaction evidence="1">
        <text>a quinone + NADPH + H(+) = a quinol + NADP(+)</text>
        <dbReference type="Rhea" id="RHEA:46164"/>
        <dbReference type="ChEBI" id="CHEBI:15378"/>
        <dbReference type="ChEBI" id="CHEBI:24646"/>
        <dbReference type="ChEBI" id="CHEBI:57783"/>
        <dbReference type="ChEBI" id="CHEBI:58349"/>
        <dbReference type="ChEBI" id="CHEBI:132124"/>
        <dbReference type="EC" id="1.6.5.2"/>
    </reaction>
</comment>
<comment type="cofactor">
    <cofactor evidence="1">
        <name>FMN</name>
        <dbReference type="ChEBI" id="CHEBI:58210"/>
    </cofactor>
    <text evidence="1">Binds 1 FMN per monomer.</text>
</comment>
<comment type="similarity">
    <text evidence="1">Belongs to the WrbA family.</text>
</comment>
<gene>
    <name type="ordered locus">ECDH10B_1076</name>
</gene>
<protein>
    <recommendedName>
        <fullName evidence="1">NAD(P)H dehydrogenase (quinone)</fullName>
        <ecNumber evidence="1">1.6.5.2</ecNumber>
    </recommendedName>
    <alternativeName>
        <fullName>Flavoprotein WrbA</fullName>
    </alternativeName>
    <alternativeName>
        <fullName evidence="1">NAD(P)H:quinone oxidoreductase</fullName>
        <shortName evidence="1">NQO</shortName>
    </alternativeName>
</protein>
<name>NQOR_ECODH</name>
<feature type="chain" id="PRO_1000200622" description="NAD(P)H dehydrogenase (quinone)">
    <location>
        <begin position="1"/>
        <end position="198"/>
    </location>
</feature>
<feature type="domain" description="Flavodoxin-like" evidence="1">
    <location>
        <begin position="4"/>
        <end position="189"/>
    </location>
</feature>
<feature type="binding site" evidence="1">
    <location>
        <begin position="10"/>
        <end position="15"/>
    </location>
    <ligand>
        <name>FMN</name>
        <dbReference type="ChEBI" id="CHEBI:58210"/>
    </ligand>
</feature>
<feature type="binding site" evidence="1">
    <location>
        <position position="12"/>
    </location>
    <ligand>
        <name>NAD(+)</name>
        <dbReference type="ChEBI" id="CHEBI:57540"/>
    </ligand>
</feature>
<feature type="binding site" evidence="1">
    <location>
        <begin position="78"/>
        <end position="80"/>
    </location>
    <ligand>
        <name>FMN</name>
        <dbReference type="ChEBI" id="CHEBI:58210"/>
    </ligand>
</feature>
<feature type="binding site" evidence="1">
    <location>
        <position position="98"/>
    </location>
    <ligand>
        <name>substrate</name>
    </ligand>
</feature>
<feature type="binding site" evidence="1">
    <location>
        <begin position="113"/>
        <end position="118"/>
    </location>
    <ligand>
        <name>FMN</name>
        <dbReference type="ChEBI" id="CHEBI:58210"/>
    </ligand>
</feature>
<feature type="binding site" evidence="1">
    <location>
        <position position="133"/>
    </location>
    <ligand>
        <name>FMN</name>
        <dbReference type="ChEBI" id="CHEBI:58210"/>
    </ligand>
</feature>
<sequence>MAKVLVLYYSMYGHIETMARAVAEGASKVDGAEVVVKRVPETMPPQLFEKAGGKTQTAPVATPQELADYDAIIFGTPTRFGNMSGQMRTFLDQTGGLWASGALYGKLASVFSSTGTGGGQEQTITSTWTTLAHHGMVIVPIGYAAQELFDVSQVRGGTPYGATTIAGGDGSRQPSQEELSIARYQGEYVAGLAVKLNG</sequence>
<reference key="1">
    <citation type="journal article" date="2008" name="J. Bacteriol.">
        <title>The complete genome sequence of Escherichia coli DH10B: insights into the biology of a laboratory workhorse.</title>
        <authorList>
            <person name="Durfee T."/>
            <person name="Nelson R."/>
            <person name="Baldwin S."/>
            <person name="Plunkett G. III"/>
            <person name="Burland V."/>
            <person name="Mau B."/>
            <person name="Petrosino J.F."/>
            <person name="Qin X."/>
            <person name="Muzny D.M."/>
            <person name="Ayele M."/>
            <person name="Gibbs R.A."/>
            <person name="Csorgo B."/>
            <person name="Posfai G."/>
            <person name="Weinstock G.M."/>
            <person name="Blattner F.R."/>
        </authorList>
    </citation>
    <scope>NUCLEOTIDE SEQUENCE [LARGE SCALE GENOMIC DNA]</scope>
    <source>
        <strain>K12 / DH10B</strain>
    </source>
</reference>
<proteinExistence type="inferred from homology"/>
<accession>B1X9C5</accession>
<evidence type="ECO:0000255" key="1">
    <source>
        <dbReference type="HAMAP-Rule" id="MF_01017"/>
    </source>
</evidence>
<organism>
    <name type="scientific">Escherichia coli (strain K12 / DH10B)</name>
    <dbReference type="NCBI Taxonomy" id="316385"/>
    <lineage>
        <taxon>Bacteria</taxon>
        <taxon>Pseudomonadati</taxon>
        <taxon>Pseudomonadota</taxon>
        <taxon>Gammaproteobacteria</taxon>
        <taxon>Enterobacterales</taxon>
        <taxon>Enterobacteriaceae</taxon>
        <taxon>Escherichia</taxon>
    </lineage>
</organism>
<keyword id="KW-0285">Flavoprotein</keyword>
<keyword id="KW-0288">FMN</keyword>
<keyword id="KW-0520">NAD</keyword>
<keyword id="KW-0521">NADP</keyword>
<keyword id="KW-0547">Nucleotide-binding</keyword>
<keyword id="KW-0560">Oxidoreductase</keyword>